<comment type="catalytic activity">
    <reaction evidence="1">
        <text>L-citrulline + L-aspartate + ATP = 2-(N(omega)-L-arginino)succinate + AMP + diphosphate + H(+)</text>
        <dbReference type="Rhea" id="RHEA:10932"/>
        <dbReference type="ChEBI" id="CHEBI:15378"/>
        <dbReference type="ChEBI" id="CHEBI:29991"/>
        <dbReference type="ChEBI" id="CHEBI:30616"/>
        <dbReference type="ChEBI" id="CHEBI:33019"/>
        <dbReference type="ChEBI" id="CHEBI:57472"/>
        <dbReference type="ChEBI" id="CHEBI:57743"/>
        <dbReference type="ChEBI" id="CHEBI:456215"/>
        <dbReference type="EC" id="6.3.4.5"/>
    </reaction>
</comment>
<comment type="pathway">
    <text evidence="1">Amino-acid biosynthesis; L-arginine biosynthesis; L-arginine from L-ornithine and carbamoyl phosphate: step 2/3.</text>
</comment>
<comment type="subunit">
    <text evidence="1">Homotetramer.</text>
</comment>
<comment type="subcellular location">
    <subcellularLocation>
        <location evidence="1">Cytoplasm</location>
    </subcellularLocation>
</comment>
<comment type="similarity">
    <text evidence="1">Belongs to the argininosuccinate synthase family. Type 1 subfamily.</text>
</comment>
<keyword id="KW-0028">Amino-acid biosynthesis</keyword>
<keyword id="KW-0055">Arginine biosynthesis</keyword>
<keyword id="KW-0067">ATP-binding</keyword>
<keyword id="KW-0963">Cytoplasm</keyword>
<keyword id="KW-0436">Ligase</keyword>
<keyword id="KW-0547">Nucleotide-binding</keyword>
<sequence length="406" mass="45587">MKKKLVLAYSGGLDTTVIIPWLKENYDYDVIAVCVDVGQGTETDGLEEKALKTGAVKYRLVKCEDEFVTDYIYPIVKAEATYEDKYLLGTSAARPLIAKKLVEVALEEGATAIAHGATGKGNDQVRFELTVKALAPNFEIIAPWREWNISSREEEIKYLEDRNIEVPMKKDDSYSRDKNLWHLSHEGLELEDPANMPNYERLLKLSNTIENAPNEGQFVELEFEKGIPTKVDGKTFSPSDLVKYLNEIGGKHAVGIVDLLENRVVGIKCRGVYETPGGTILYAAHREIEHLCLDRETLYFKHVVSHKLTDLVYSGRWFTPLREALCAFIDSTQQTVTGKVKLKLYKGNIIPAGVTSPYSLYNQSLASFTTGELYDHHDAQGFITLFGLPLKVNALMKEQAKKMGLK</sequence>
<accession>C0R1H5</accession>
<organism>
    <name type="scientific">Brachyspira hyodysenteriae (strain ATCC 49526 / WA1)</name>
    <dbReference type="NCBI Taxonomy" id="565034"/>
    <lineage>
        <taxon>Bacteria</taxon>
        <taxon>Pseudomonadati</taxon>
        <taxon>Spirochaetota</taxon>
        <taxon>Spirochaetia</taxon>
        <taxon>Brachyspirales</taxon>
        <taxon>Brachyspiraceae</taxon>
        <taxon>Brachyspira</taxon>
    </lineage>
</organism>
<name>ASSY_BRAHW</name>
<gene>
    <name evidence="1" type="primary">argG</name>
    <name type="ordered locus">BHWA1_01491</name>
</gene>
<feature type="chain" id="PRO_1000191882" description="Argininosuccinate synthase">
    <location>
        <begin position="1"/>
        <end position="406"/>
    </location>
</feature>
<feature type="binding site" evidence="1">
    <location>
        <begin position="8"/>
        <end position="16"/>
    </location>
    <ligand>
        <name>ATP</name>
        <dbReference type="ChEBI" id="CHEBI:30616"/>
    </ligand>
</feature>
<feature type="binding site" evidence="1">
    <location>
        <position position="86"/>
    </location>
    <ligand>
        <name>L-citrulline</name>
        <dbReference type="ChEBI" id="CHEBI:57743"/>
    </ligand>
</feature>
<feature type="binding site" evidence="1">
    <location>
        <position position="91"/>
    </location>
    <ligand>
        <name>L-citrulline</name>
        <dbReference type="ChEBI" id="CHEBI:57743"/>
    </ligand>
</feature>
<feature type="binding site" evidence="1">
    <location>
        <position position="116"/>
    </location>
    <ligand>
        <name>ATP</name>
        <dbReference type="ChEBI" id="CHEBI:30616"/>
    </ligand>
</feature>
<feature type="binding site" evidence="1">
    <location>
        <position position="118"/>
    </location>
    <ligand>
        <name>L-aspartate</name>
        <dbReference type="ChEBI" id="CHEBI:29991"/>
    </ligand>
</feature>
<feature type="binding site" evidence="1">
    <location>
        <position position="122"/>
    </location>
    <ligand>
        <name>L-aspartate</name>
        <dbReference type="ChEBI" id="CHEBI:29991"/>
    </ligand>
</feature>
<feature type="binding site" evidence="1">
    <location>
        <position position="122"/>
    </location>
    <ligand>
        <name>L-citrulline</name>
        <dbReference type="ChEBI" id="CHEBI:57743"/>
    </ligand>
</feature>
<feature type="binding site" evidence="1">
    <location>
        <position position="123"/>
    </location>
    <ligand>
        <name>L-aspartate</name>
        <dbReference type="ChEBI" id="CHEBI:29991"/>
    </ligand>
</feature>
<feature type="binding site" evidence="1">
    <location>
        <position position="126"/>
    </location>
    <ligand>
        <name>L-citrulline</name>
        <dbReference type="ChEBI" id="CHEBI:57743"/>
    </ligand>
</feature>
<feature type="binding site" evidence="1">
    <location>
        <position position="175"/>
    </location>
    <ligand>
        <name>L-citrulline</name>
        <dbReference type="ChEBI" id="CHEBI:57743"/>
    </ligand>
</feature>
<feature type="binding site" evidence="1">
    <location>
        <position position="184"/>
    </location>
    <ligand>
        <name>L-citrulline</name>
        <dbReference type="ChEBI" id="CHEBI:57743"/>
    </ligand>
</feature>
<feature type="binding site" evidence="1">
    <location>
        <position position="261"/>
    </location>
    <ligand>
        <name>L-citrulline</name>
        <dbReference type="ChEBI" id="CHEBI:57743"/>
    </ligand>
</feature>
<feature type="binding site" evidence="1">
    <location>
        <position position="273"/>
    </location>
    <ligand>
        <name>L-citrulline</name>
        <dbReference type="ChEBI" id="CHEBI:57743"/>
    </ligand>
</feature>
<proteinExistence type="inferred from homology"/>
<dbReference type="EC" id="6.3.4.5" evidence="1"/>
<dbReference type="EMBL" id="CP001357">
    <property type="protein sequence ID" value="ACN83963.1"/>
    <property type="molecule type" value="Genomic_DNA"/>
</dbReference>
<dbReference type="RefSeq" id="WP_012671005.1">
    <property type="nucleotide sequence ID" value="NC_012225.1"/>
</dbReference>
<dbReference type="SMR" id="C0R1H5"/>
<dbReference type="STRING" id="565034.BHWA1_01491"/>
<dbReference type="GeneID" id="63962587"/>
<dbReference type="KEGG" id="bhy:BHWA1_01491"/>
<dbReference type="eggNOG" id="COG0137">
    <property type="taxonomic scope" value="Bacteria"/>
</dbReference>
<dbReference type="HOGENOM" id="CLU_032784_4_2_12"/>
<dbReference type="UniPathway" id="UPA00068">
    <property type="reaction ID" value="UER00113"/>
</dbReference>
<dbReference type="Proteomes" id="UP000001803">
    <property type="component" value="Chromosome"/>
</dbReference>
<dbReference type="GO" id="GO:0005737">
    <property type="term" value="C:cytoplasm"/>
    <property type="evidence" value="ECO:0007669"/>
    <property type="project" value="UniProtKB-SubCell"/>
</dbReference>
<dbReference type="GO" id="GO:0004055">
    <property type="term" value="F:argininosuccinate synthase activity"/>
    <property type="evidence" value="ECO:0007669"/>
    <property type="project" value="UniProtKB-UniRule"/>
</dbReference>
<dbReference type="GO" id="GO:0005524">
    <property type="term" value="F:ATP binding"/>
    <property type="evidence" value="ECO:0007669"/>
    <property type="project" value="UniProtKB-UniRule"/>
</dbReference>
<dbReference type="GO" id="GO:0000053">
    <property type="term" value="P:argininosuccinate metabolic process"/>
    <property type="evidence" value="ECO:0007669"/>
    <property type="project" value="TreeGrafter"/>
</dbReference>
<dbReference type="GO" id="GO:0006526">
    <property type="term" value="P:L-arginine biosynthetic process"/>
    <property type="evidence" value="ECO:0007669"/>
    <property type="project" value="UniProtKB-UniRule"/>
</dbReference>
<dbReference type="GO" id="GO:0000050">
    <property type="term" value="P:urea cycle"/>
    <property type="evidence" value="ECO:0007669"/>
    <property type="project" value="TreeGrafter"/>
</dbReference>
<dbReference type="CDD" id="cd01999">
    <property type="entry name" value="ASS"/>
    <property type="match status" value="1"/>
</dbReference>
<dbReference type="FunFam" id="3.40.50.620:FF:000019">
    <property type="entry name" value="Argininosuccinate synthase"/>
    <property type="match status" value="1"/>
</dbReference>
<dbReference type="FunFam" id="3.90.1260.10:FF:000007">
    <property type="entry name" value="Argininosuccinate synthase"/>
    <property type="match status" value="1"/>
</dbReference>
<dbReference type="Gene3D" id="3.90.1260.10">
    <property type="entry name" value="Argininosuccinate synthetase, chain A, domain 2"/>
    <property type="match status" value="1"/>
</dbReference>
<dbReference type="Gene3D" id="3.40.50.620">
    <property type="entry name" value="HUPs"/>
    <property type="match status" value="1"/>
</dbReference>
<dbReference type="Gene3D" id="1.20.5.470">
    <property type="entry name" value="Single helix bin"/>
    <property type="match status" value="1"/>
</dbReference>
<dbReference type="HAMAP" id="MF_00005">
    <property type="entry name" value="Arg_succ_synth_type1"/>
    <property type="match status" value="1"/>
</dbReference>
<dbReference type="InterPro" id="IPR048268">
    <property type="entry name" value="Arginosuc_syn_C"/>
</dbReference>
<dbReference type="InterPro" id="IPR048267">
    <property type="entry name" value="Arginosuc_syn_N"/>
</dbReference>
<dbReference type="InterPro" id="IPR001518">
    <property type="entry name" value="Arginosuc_synth"/>
</dbReference>
<dbReference type="InterPro" id="IPR018223">
    <property type="entry name" value="Arginosuc_synth_CS"/>
</dbReference>
<dbReference type="InterPro" id="IPR023434">
    <property type="entry name" value="Arginosuc_synth_type_1_subfam"/>
</dbReference>
<dbReference type="InterPro" id="IPR024074">
    <property type="entry name" value="AS_cat/multimer_dom_body"/>
</dbReference>
<dbReference type="InterPro" id="IPR014729">
    <property type="entry name" value="Rossmann-like_a/b/a_fold"/>
</dbReference>
<dbReference type="NCBIfam" id="TIGR00032">
    <property type="entry name" value="argG"/>
    <property type="match status" value="1"/>
</dbReference>
<dbReference type="NCBIfam" id="NF001770">
    <property type="entry name" value="PRK00509.1"/>
    <property type="match status" value="1"/>
</dbReference>
<dbReference type="PANTHER" id="PTHR11587">
    <property type="entry name" value="ARGININOSUCCINATE SYNTHASE"/>
    <property type="match status" value="1"/>
</dbReference>
<dbReference type="PANTHER" id="PTHR11587:SF2">
    <property type="entry name" value="ARGININOSUCCINATE SYNTHASE"/>
    <property type="match status" value="1"/>
</dbReference>
<dbReference type="Pfam" id="PF20979">
    <property type="entry name" value="Arginosuc_syn_C"/>
    <property type="match status" value="1"/>
</dbReference>
<dbReference type="Pfam" id="PF00764">
    <property type="entry name" value="Arginosuc_synth"/>
    <property type="match status" value="1"/>
</dbReference>
<dbReference type="SUPFAM" id="SSF52402">
    <property type="entry name" value="Adenine nucleotide alpha hydrolases-like"/>
    <property type="match status" value="1"/>
</dbReference>
<dbReference type="SUPFAM" id="SSF69864">
    <property type="entry name" value="Argininosuccinate synthetase, C-terminal domain"/>
    <property type="match status" value="1"/>
</dbReference>
<dbReference type="PROSITE" id="PS00564">
    <property type="entry name" value="ARGININOSUCCIN_SYN_1"/>
    <property type="match status" value="1"/>
</dbReference>
<dbReference type="PROSITE" id="PS00565">
    <property type="entry name" value="ARGININOSUCCIN_SYN_2"/>
    <property type="match status" value="1"/>
</dbReference>
<reference key="1">
    <citation type="journal article" date="2009" name="PLoS ONE">
        <title>Genome sequence of the pathogenic intestinal spirochete Brachyspira hyodysenteriae reveals adaptations to its lifestyle in the porcine large intestine.</title>
        <authorList>
            <person name="Bellgard M.I."/>
            <person name="Wanchanthuek P."/>
            <person name="La T."/>
            <person name="Ryan K."/>
            <person name="Moolhuijzen P."/>
            <person name="Albertyn Z."/>
            <person name="Shaban B."/>
            <person name="Motro Y."/>
            <person name="Dunn D.S."/>
            <person name="Schibeci D."/>
            <person name="Hunter A."/>
            <person name="Barrero R."/>
            <person name="Phillips N.D."/>
            <person name="Hampson D.J."/>
        </authorList>
    </citation>
    <scope>NUCLEOTIDE SEQUENCE [LARGE SCALE GENOMIC DNA]</scope>
    <source>
        <strain>ATCC 49526 / WA1</strain>
    </source>
</reference>
<evidence type="ECO:0000255" key="1">
    <source>
        <dbReference type="HAMAP-Rule" id="MF_00005"/>
    </source>
</evidence>
<protein>
    <recommendedName>
        <fullName evidence="1">Argininosuccinate synthase</fullName>
        <ecNumber evidence="1">6.3.4.5</ecNumber>
    </recommendedName>
    <alternativeName>
        <fullName evidence="1">Citrulline--aspartate ligase</fullName>
    </alternativeName>
</protein>